<organism>
    <name type="scientific">Rhodopseudomonas palustris (strain BisB5)</name>
    <dbReference type="NCBI Taxonomy" id="316057"/>
    <lineage>
        <taxon>Bacteria</taxon>
        <taxon>Pseudomonadati</taxon>
        <taxon>Pseudomonadota</taxon>
        <taxon>Alphaproteobacteria</taxon>
        <taxon>Hyphomicrobiales</taxon>
        <taxon>Nitrobacteraceae</taxon>
        <taxon>Rhodopseudomonas</taxon>
    </lineage>
</organism>
<accession>Q133X2</accession>
<dbReference type="EC" id="6.3.2.8" evidence="1"/>
<dbReference type="EMBL" id="CP000283">
    <property type="protein sequence ID" value="ABE40617.1"/>
    <property type="molecule type" value="Genomic_DNA"/>
</dbReference>
<dbReference type="SMR" id="Q133X2"/>
<dbReference type="STRING" id="316057.RPD_3393"/>
<dbReference type="KEGG" id="rpd:RPD_3393"/>
<dbReference type="eggNOG" id="COG0773">
    <property type="taxonomic scope" value="Bacteria"/>
</dbReference>
<dbReference type="HOGENOM" id="CLU_028104_2_2_5"/>
<dbReference type="BioCyc" id="RPAL316057:RPD_RS17065-MONOMER"/>
<dbReference type="UniPathway" id="UPA00219"/>
<dbReference type="Proteomes" id="UP000001818">
    <property type="component" value="Chromosome"/>
</dbReference>
<dbReference type="GO" id="GO:0005737">
    <property type="term" value="C:cytoplasm"/>
    <property type="evidence" value="ECO:0007669"/>
    <property type="project" value="UniProtKB-SubCell"/>
</dbReference>
<dbReference type="GO" id="GO:0005524">
    <property type="term" value="F:ATP binding"/>
    <property type="evidence" value="ECO:0007669"/>
    <property type="project" value="UniProtKB-UniRule"/>
</dbReference>
<dbReference type="GO" id="GO:0008763">
    <property type="term" value="F:UDP-N-acetylmuramate-L-alanine ligase activity"/>
    <property type="evidence" value="ECO:0007669"/>
    <property type="project" value="UniProtKB-UniRule"/>
</dbReference>
<dbReference type="GO" id="GO:0051301">
    <property type="term" value="P:cell division"/>
    <property type="evidence" value="ECO:0007669"/>
    <property type="project" value="UniProtKB-KW"/>
</dbReference>
<dbReference type="GO" id="GO:0071555">
    <property type="term" value="P:cell wall organization"/>
    <property type="evidence" value="ECO:0007669"/>
    <property type="project" value="UniProtKB-KW"/>
</dbReference>
<dbReference type="GO" id="GO:0009252">
    <property type="term" value="P:peptidoglycan biosynthetic process"/>
    <property type="evidence" value="ECO:0007669"/>
    <property type="project" value="UniProtKB-UniRule"/>
</dbReference>
<dbReference type="GO" id="GO:0008360">
    <property type="term" value="P:regulation of cell shape"/>
    <property type="evidence" value="ECO:0007669"/>
    <property type="project" value="UniProtKB-KW"/>
</dbReference>
<dbReference type="Gene3D" id="3.90.190.20">
    <property type="entry name" value="Mur ligase, C-terminal domain"/>
    <property type="match status" value="1"/>
</dbReference>
<dbReference type="Gene3D" id="3.40.1190.10">
    <property type="entry name" value="Mur-like, catalytic domain"/>
    <property type="match status" value="1"/>
</dbReference>
<dbReference type="Gene3D" id="3.40.50.720">
    <property type="entry name" value="NAD(P)-binding Rossmann-like Domain"/>
    <property type="match status" value="1"/>
</dbReference>
<dbReference type="HAMAP" id="MF_00046">
    <property type="entry name" value="MurC"/>
    <property type="match status" value="1"/>
</dbReference>
<dbReference type="InterPro" id="IPR036565">
    <property type="entry name" value="Mur-like_cat_sf"/>
</dbReference>
<dbReference type="InterPro" id="IPR004101">
    <property type="entry name" value="Mur_ligase_C"/>
</dbReference>
<dbReference type="InterPro" id="IPR036615">
    <property type="entry name" value="Mur_ligase_C_dom_sf"/>
</dbReference>
<dbReference type="InterPro" id="IPR013221">
    <property type="entry name" value="Mur_ligase_cen"/>
</dbReference>
<dbReference type="InterPro" id="IPR000713">
    <property type="entry name" value="Mur_ligase_N"/>
</dbReference>
<dbReference type="InterPro" id="IPR050061">
    <property type="entry name" value="MurCDEF_pg_biosynth"/>
</dbReference>
<dbReference type="InterPro" id="IPR005758">
    <property type="entry name" value="UDP-N-AcMur_Ala_ligase_MurC"/>
</dbReference>
<dbReference type="NCBIfam" id="TIGR01082">
    <property type="entry name" value="murC"/>
    <property type="match status" value="1"/>
</dbReference>
<dbReference type="PANTHER" id="PTHR43445:SF3">
    <property type="entry name" value="UDP-N-ACETYLMURAMATE--L-ALANINE LIGASE"/>
    <property type="match status" value="1"/>
</dbReference>
<dbReference type="PANTHER" id="PTHR43445">
    <property type="entry name" value="UDP-N-ACETYLMURAMATE--L-ALANINE LIGASE-RELATED"/>
    <property type="match status" value="1"/>
</dbReference>
<dbReference type="Pfam" id="PF01225">
    <property type="entry name" value="Mur_ligase"/>
    <property type="match status" value="1"/>
</dbReference>
<dbReference type="Pfam" id="PF02875">
    <property type="entry name" value="Mur_ligase_C"/>
    <property type="match status" value="1"/>
</dbReference>
<dbReference type="Pfam" id="PF08245">
    <property type="entry name" value="Mur_ligase_M"/>
    <property type="match status" value="1"/>
</dbReference>
<dbReference type="SUPFAM" id="SSF51984">
    <property type="entry name" value="MurCD N-terminal domain"/>
    <property type="match status" value="1"/>
</dbReference>
<dbReference type="SUPFAM" id="SSF53623">
    <property type="entry name" value="MurD-like peptide ligases, catalytic domain"/>
    <property type="match status" value="1"/>
</dbReference>
<dbReference type="SUPFAM" id="SSF53244">
    <property type="entry name" value="MurD-like peptide ligases, peptide-binding domain"/>
    <property type="match status" value="1"/>
</dbReference>
<gene>
    <name evidence="1" type="primary">murC</name>
    <name type="ordered locus">RPD_3393</name>
</gene>
<proteinExistence type="inferred from homology"/>
<sequence length="467" mass="49689">MRLPREIGPIHFVGIGGIGMSGIAEVLCNLGYTVQGSDASESANVNRLREKGIAISVGHKADNIAGADVLVVSTAIKRDNPELLAARAQRIPVVRRAEMLAELMRLKSCIAIAGTHGKTTTTSMVAALLDAGDVDPTVINGGIINAYGTNARLGAGDWMVVEADESDGTFLKLPADVAVVTNVDPEHLDHFKTFDAVQDAFRIFVENVPFYGFAVMCIDHPVVQALVGKIEDRRIITYGENPQADARLLDLKPSGAGSTFKVAFRDRKAGTAHEITDLMLPMPGPHNALNAVAAIAVAHELGLSDDTIRKALAAFGGVRRRFTKTGEWNGVTIIDDYGHHPVEIAAVLKAARQSTSAKVIAVVQPHRFTRLQSLFEEFCTCFNDADTVIVADVYPAGEAPIAGIDRDHFVLGLRAHGHREVIPLQDSASLAGVVAGVARSGDYVVCLGAGNITQWAYALPGELKALG</sequence>
<comment type="function">
    <text evidence="1">Cell wall formation.</text>
</comment>
<comment type="catalytic activity">
    <reaction evidence="1">
        <text>UDP-N-acetyl-alpha-D-muramate + L-alanine + ATP = UDP-N-acetyl-alpha-D-muramoyl-L-alanine + ADP + phosphate + H(+)</text>
        <dbReference type="Rhea" id="RHEA:23372"/>
        <dbReference type="ChEBI" id="CHEBI:15378"/>
        <dbReference type="ChEBI" id="CHEBI:30616"/>
        <dbReference type="ChEBI" id="CHEBI:43474"/>
        <dbReference type="ChEBI" id="CHEBI:57972"/>
        <dbReference type="ChEBI" id="CHEBI:70757"/>
        <dbReference type="ChEBI" id="CHEBI:83898"/>
        <dbReference type="ChEBI" id="CHEBI:456216"/>
        <dbReference type="EC" id="6.3.2.8"/>
    </reaction>
</comment>
<comment type="pathway">
    <text evidence="1">Cell wall biogenesis; peptidoglycan biosynthesis.</text>
</comment>
<comment type="subcellular location">
    <subcellularLocation>
        <location evidence="1">Cytoplasm</location>
    </subcellularLocation>
</comment>
<comment type="similarity">
    <text evidence="1">Belongs to the MurCDEF family.</text>
</comment>
<name>MURC_RHOPS</name>
<feature type="chain" id="PRO_1000004393" description="UDP-N-acetylmuramate--L-alanine ligase">
    <location>
        <begin position="1"/>
        <end position="467"/>
    </location>
</feature>
<feature type="binding site" evidence="1">
    <location>
        <begin position="114"/>
        <end position="120"/>
    </location>
    <ligand>
        <name>ATP</name>
        <dbReference type="ChEBI" id="CHEBI:30616"/>
    </ligand>
</feature>
<reference key="1">
    <citation type="submission" date="2006-03" db="EMBL/GenBank/DDBJ databases">
        <title>Complete sequence of Rhodopseudomonas palustris BisB5.</title>
        <authorList>
            <consortium name="US DOE Joint Genome Institute"/>
            <person name="Copeland A."/>
            <person name="Lucas S."/>
            <person name="Lapidus A."/>
            <person name="Barry K."/>
            <person name="Detter J.C."/>
            <person name="Glavina del Rio T."/>
            <person name="Hammon N."/>
            <person name="Israni S."/>
            <person name="Dalin E."/>
            <person name="Tice H."/>
            <person name="Pitluck S."/>
            <person name="Chain P."/>
            <person name="Malfatti S."/>
            <person name="Shin M."/>
            <person name="Vergez L."/>
            <person name="Schmutz J."/>
            <person name="Larimer F."/>
            <person name="Land M."/>
            <person name="Hauser L."/>
            <person name="Pelletier D.A."/>
            <person name="Kyrpides N."/>
            <person name="Lykidis A."/>
            <person name="Oda Y."/>
            <person name="Harwood C.S."/>
            <person name="Richardson P."/>
        </authorList>
    </citation>
    <scope>NUCLEOTIDE SEQUENCE [LARGE SCALE GENOMIC DNA]</scope>
    <source>
        <strain>BisB5</strain>
    </source>
</reference>
<evidence type="ECO:0000255" key="1">
    <source>
        <dbReference type="HAMAP-Rule" id="MF_00046"/>
    </source>
</evidence>
<keyword id="KW-0067">ATP-binding</keyword>
<keyword id="KW-0131">Cell cycle</keyword>
<keyword id="KW-0132">Cell division</keyword>
<keyword id="KW-0133">Cell shape</keyword>
<keyword id="KW-0961">Cell wall biogenesis/degradation</keyword>
<keyword id="KW-0963">Cytoplasm</keyword>
<keyword id="KW-0436">Ligase</keyword>
<keyword id="KW-0547">Nucleotide-binding</keyword>
<keyword id="KW-0573">Peptidoglycan synthesis</keyword>
<protein>
    <recommendedName>
        <fullName evidence="1">UDP-N-acetylmuramate--L-alanine ligase</fullName>
        <ecNumber evidence="1">6.3.2.8</ecNumber>
    </recommendedName>
    <alternativeName>
        <fullName evidence="1">UDP-N-acetylmuramoyl-L-alanine synthetase</fullName>
    </alternativeName>
</protein>